<dbReference type="EMBL" id="CP000919">
    <property type="protein sequence ID" value="ACO19076.1"/>
    <property type="molecule type" value="Genomic_DNA"/>
</dbReference>
<dbReference type="RefSeq" id="WP_000092756.1">
    <property type="nucleotide sequence ID" value="NC_012466.1"/>
</dbReference>
<dbReference type="SMR" id="C1CBQ4"/>
<dbReference type="GeneID" id="93738707"/>
<dbReference type="KEGG" id="sjj:SPJ_0111"/>
<dbReference type="HOGENOM" id="CLU_092403_0_1_9"/>
<dbReference type="Proteomes" id="UP000002206">
    <property type="component" value="Chromosome"/>
</dbReference>
<dbReference type="GO" id="GO:0015935">
    <property type="term" value="C:small ribosomal subunit"/>
    <property type="evidence" value="ECO:0007669"/>
    <property type="project" value="InterPro"/>
</dbReference>
<dbReference type="GO" id="GO:0019843">
    <property type="term" value="F:rRNA binding"/>
    <property type="evidence" value="ECO:0007669"/>
    <property type="project" value="UniProtKB-UniRule"/>
</dbReference>
<dbReference type="GO" id="GO:0003735">
    <property type="term" value="F:structural constituent of ribosome"/>
    <property type="evidence" value="ECO:0007669"/>
    <property type="project" value="InterPro"/>
</dbReference>
<dbReference type="GO" id="GO:0042274">
    <property type="term" value="P:ribosomal small subunit biogenesis"/>
    <property type="evidence" value="ECO:0007669"/>
    <property type="project" value="TreeGrafter"/>
</dbReference>
<dbReference type="GO" id="GO:0006412">
    <property type="term" value="P:translation"/>
    <property type="evidence" value="ECO:0007669"/>
    <property type="project" value="UniProtKB-UniRule"/>
</dbReference>
<dbReference type="CDD" id="cd00165">
    <property type="entry name" value="S4"/>
    <property type="match status" value="1"/>
</dbReference>
<dbReference type="FunFam" id="1.10.1050.10:FF:000001">
    <property type="entry name" value="30S ribosomal protein S4"/>
    <property type="match status" value="1"/>
</dbReference>
<dbReference type="FunFam" id="3.10.290.10:FF:000001">
    <property type="entry name" value="30S ribosomal protein S4"/>
    <property type="match status" value="1"/>
</dbReference>
<dbReference type="Gene3D" id="1.10.1050.10">
    <property type="entry name" value="Ribosomal Protein S4 Delta 41, Chain A, domain 1"/>
    <property type="match status" value="1"/>
</dbReference>
<dbReference type="Gene3D" id="3.10.290.10">
    <property type="entry name" value="RNA-binding S4 domain"/>
    <property type="match status" value="1"/>
</dbReference>
<dbReference type="HAMAP" id="MF_01306_B">
    <property type="entry name" value="Ribosomal_uS4_B"/>
    <property type="match status" value="1"/>
</dbReference>
<dbReference type="InterPro" id="IPR022801">
    <property type="entry name" value="Ribosomal_uS4"/>
</dbReference>
<dbReference type="InterPro" id="IPR005709">
    <property type="entry name" value="Ribosomal_uS4_bac-type"/>
</dbReference>
<dbReference type="InterPro" id="IPR018079">
    <property type="entry name" value="Ribosomal_uS4_CS"/>
</dbReference>
<dbReference type="InterPro" id="IPR001912">
    <property type="entry name" value="Ribosomal_uS4_N"/>
</dbReference>
<dbReference type="InterPro" id="IPR002942">
    <property type="entry name" value="S4_RNA-bd"/>
</dbReference>
<dbReference type="InterPro" id="IPR036986">
    <property type="entry name" value="S4_RNA-bd_sf"/>
</dbReference>
<dbReference type="NCBIfam" id="NF003717">
    <property type="entry name" value="PRK05327.1"/>
    <property type="match status" value="1"/>
</dbReference>
<dbReference type="NCBIfam" id="TIGR01017">
    <property type="entry name" value="rpsD_bact"/>
    <property type="match status" value="1"/>
</dbReference>
<dbReference type="PANTHER" id="PTHR11831">
    <property type="entry name" value="30S 40S RIBOSOMAL PROTEIN"/>
    <property type="match status" value="1"/>
</dbReference>
<dbReference type="PANTHER" id="PTHR11831:SF4">
    <property type="entry name" value="SMALL RIBOSOMAL SUBUNIT PROTEIN US4M"/>
    <property type="match status" value="1"/>
</dbReference>
<dbReference type="Pfam" id="PF00163">
    <property type="entry name" value="Ribosomal_S4"/>
    <property type="match status" value="1"/>
</dbReference>
<dbReference type="Pfam" id="PF01479">
    <property type="entry name" value="S4"/>
    <property type="match status" value="1"/>
</dbReference>
<dbReference type="SMART" id="SM01390">
    <property type="entry name" value="Ribosomal_S4"/>
    <property type="match status" value="1"/>
</dbReference>
<dbReference type="SMART" id="SM00363">
    <property type="entry name" value="S4"/>
    <property type="match status" value="1"/>
</dbReference>
<dbReference type="SUPFAM" id="SSF55174">
    <property type="entry name" value="Alpha-L RNA-binding motif"/>
    <property type="match status" value="1"/>
</dbReference>
<dbReference type="PROSITE" id="PS00632">
    <property type="entry name" value="RIBOSOMAL_S4"/>
    <property type="match status" value="1"/>
</dbReference>
<dbReference type="PROSITE" id="PS50889">
    <property type="entry name" value="S4"/>
    <property type="match status" value="1"/>
</dbReference>
<reference key="1">
    <citation type="journal article" date="2010" name="Genome Biol.">
        <title>Structure and dynamics of the pan-genome of Streptococcus pneumoniae and closely related species.</title>
        <authorList>
            <person name="Donati C."/>
            <person name="Hiller N.L."/>
            <person name="Tettelin H."/>
            <person name="Muzzi A."/>
            <person name="Croucher N.J."/>
            <person name="Angiuoli S.V."/>
            <person name="Oggioni M."/>
            <person name="Dunning Hotopp J.C."/>
            <person name="Hu F.Z."/>
            <person name="Riley D.R."/>
            <person name="Covacci A."/>
            <person name="Mitchell T.J."/>
            <person name="Bentley S.D."/>
            <person name="Kilian M."/>
            <person name="Ehrlich G.D."/>
            <person name="Rappuoli R."/>
            <person name="Moxon E.R."/>
            <person name="Masignani V."/>
        </authorList>
    </citation>
    <scope>NUCLEOTIDE SEQUENCE [LARGE SCALE GENOMIC DNA]</scope>
    <source>
        <strain>JJA</strain>
    </source>
</reference>
<protein>
    <recommendedName>
        <fullName evidence="1">Small ribosomal subunit protein uS4</fullName>
    </recommendedName>
    <alternativeName>
        <fullName evidence="2">30S ribosomal protein S4</fullName>
    </alternativeName>
</protein>
<keyword id="KW-0687">Ribonucleoprotein</keyword>
<keyword id="KW-0689">Ribosomal protein</keyword>
<keyword id="KW-0694">RNA-binding</keyword>
<keyword id="KW-0699">rRNA-binding</keyword>
<feature type="chain" id="PRO_1000165429" description="Small ribosomal subunit protein uS4">
    <location>
        <begin position="1"/>
        <end position="203"/>
    </location>
</feature>
<feature type="domain" description="S4 RNA-binding" evidence="1">
    <location>
        <begin position="93"/>
        <end position="156"/>
    </location>
</feature>
<comment type="function">
    <text evidence="1">One of the primary rRNA binding proteins, it binds directly to 16S rRNA where it nucleates assembly of the body of the 30S subunit.</text>
</comment>
<comment type="function">
    <text evidence="1">With S5 and S12 plays an important role in translational accuracy.</text>
</comment>
<comment type="subunit">
    <text evidence="1">Part of the 30S ribosomal subunit. Contacts protein S5. The interaction surface between S4 and S5 is involved in control of translational fidelity.</text>
</comment>
<comment type="similarity">
    <text evidence="1">Belongs to the universal ribosomal protein uS4 family.</text>
</comment>
<evidence type="ECO:0000255" key="1">
    <source>
        <dbReference type="HAMAP-Rule" id="MF_01306"/>
    </source>
</evidence>
<evidence type="ECO:0000305" key="2"/>
<accession>C1CBQ4</accession>
<sequence>MSRYTGPSWKQARRLGLSLTGTGKELARRNYVPGQHGPNNRSKLSEYGLQLAEKQKLRFTYGVGEKQFRNLFVQATKIKGGILGFNFMLLLERRLDNVVYRLGLATTRRQARQFVNHGHILVDGKRVDIPSYRVTPGQVISVREKSLKVPAILEAVEATLGRPAFVSFDAEKLEGSLTRLPERDEINPEINEALVVEFYNKML</sequence>
<name>RS4_STRZJ</name>
<proteinExistence type="inferred from homology"/>
<organism>
    <name type="scientific">Streptococcus pneumoniae (strain JJA)</name>
    <dbReference type="NCBI Taxonomy" id="488222"/>
    <lineage>
        <taxon>Bacteria</taxon>
        <taxon>Bacillati</taxon>
        <taxon>Bacillota</taxon>
        <taxon>Bacilli</taxon>
        <taxon>Lactobacillales</taxon>
        <taxon>Streptococcaceae</taxon>
        <taxon>Streptococcus</taxon>
    </lineage>
</organism>
<gene>
    <name evidence="1" type="primary">rpsD</name>
    <name type="ordered locus">SPJ_0111</name>
</gene>